<keyword id="KW-0963">Cytoplasm</keyword>
<keyword id="KW-0238">DNA-binding</keyword>
<keyword id="KW-0804">Transcription</keyword>
<keyword id="KW-0805">Transcription regulation</keyword>
<protein>
    <recommendedName>
        <fullName evidence="1">Probable transcriptional regulatory protein LCABL_11860</fullName>
    </recommendedName>
</protein>
<reference key="1">
    <citation type="submission" date="2008-06" db="EMBL/GenBank/DDBJ databases">
        <title>Lactobacillus casei BL23 complete genome sequence.</title>
        <authorList>
            <person name="Maze A."/>
            <person name="Boel G."/>
            <person name="Bourand A."/>
            <person name="Loux V."/>
            <person name="Gibrat J.F."/>
            <person name="Zuniga M."/>
            <person name="Hartke A."/>
            <person name="Deutscher J."/>
        </authorList>
    </citation>
    <scope>NUCLEOTIDE SEQUENCE [LARGE SCALE GENOMIC DNA]</scope>
    <source>
        <strain>BL23</strain>
    </source>
</reference>
<sequence>MSGHSKWHNIQGRKNAQDSKRGKIFQKLSRELYMAAKQGGPDPSGNPSLRLVMDKAKAANMPKDNIKRALDKASDRDAANYDEVTYEGYGPGGVAILVEALTDNRNRTSSTVRVAITRHGGNMAAAGAVSYMFDRKGYLVISRDDLDVDEDQMLEDALEAGAEDMQTSDEAFEIYTDPKEFAQVRDALEEKGYKFVQNELTMVPQNLTPIPEDKVEQFQAMIDQLEDDDDVQEVYTAGDWPDD</sequence>
<gene>
    <name type="ordered locus">LCABL_11860</name>
</gene>
<evidence type="ECO:0000255" key="1">
    <source>
        <dbReference type="HAMAP-Rule" id="MF_00693"/>
    </source>
</evidence>
<evidence type="ECO:0000256" key="2">
    <source>
        <dbReference type="SAM" id="MobiDB-lite"/>
    </source>
</evidence>
<dbReference type="EMBL" id="FM177140">
    <property type="protein sequence ID" value="CAQ66271.1"/>
    <property type="molecule type" value="Genomic_DNA"/>
</dbReference>
<dbReference type="SMR" id="B3WD20"/>
<dbReference type="KEGG" id="lcb:LCABL_11860"/>
<dbReference type="HOGENOM" id="CLU_062974_3_0_9"/>
<dbReference type="GO" id="GO:0005829">
    <property type="term" value="C:cytosol"/>
    <property type="evidence" value="ECO:0007669"/>
    <property type="project" value="TreeGrafter"/>
</dbReference>
<dbReference type="GO" id="GO:0003677">
    <property type="term" value="F:DNA binding"/>
    <property type="evidence" value="ECO:0007669"/>
    <property type="project" value="UniProtKB-UniRule"/>
</dbReference>
<dbReference type="GO" id="GO:0006355">
    <property type="term" value="P:regulation of DNA-templated transcription"/>
    <property type="evidence" value="ECO:0007669"/>
    <property type="project" value="UniProtKB-UniRule"/>
</dbReference>
<dbReference type="FunFam" id="1.10.10.200:FF:000002">
    <property type="entry name" value="Probable transcriptional regulatory protein CLM62_37755"/>
    <property type="match status" value="1"/>
</dbReference>
<dbReference type="FunFam" id="3.30.70.980:FF:000002">
    <property type="entry name" value="Probable transcriptional regulatory protein YebC"/>
    <property type="match status" value="1"/>
</dbReference>
<dbReference type="Gene3D" id="1.10.10.200">
    <property type="match status" value="1"/>
</dbReference>
<dbReference type="Gene3D" id="3.30.70.980">
    <property type="match status" value="2"/>
</dbReference>
<dbReference type="HAMAP" id="MF_00693">
    <property type="entry name" value="Transcrip_reg_TACO1"/>
    <property type="match status" value="1"/>
</dbReference>
<dbReference type="InterPro" id="IPR017856">
    <property type="entry name" value="Integrase-like_N"/>
</dbReference>
<dbReference type="InterPro" id="IPR048300">
    <property type="entry name" value="TACO1_YebC-like_2nd/3rd_dom"/>
</dbReference>
<dbReference type="InterPro" id="IPR049083">
    <property type="entry name" value="TACO1_YebC_N"/>
</dbReference>
<dbReference type="InterPro" id="IPR002876">
    <property type="entry name" value="Transcrip_reg_TACO1-like"/>
</dbReference>
<dbReference type="InterPro" id="IPR026564">
    <property type="entry name" value="Transcrip_reg_TACO1-like_dom3"/>
</dbReference>
<dbReference type="InterPro" id="IPR029072">
    <property type="entry name" value="YebC-like"/>
</dbReference>
<dbReference type="NCBIfam" id="NF001030">
    <property type="entry name" value="PRK00110.1"/>
    <property type="match status" value="1"/>
</dbReference>
<dbReference type="NCBIfam" id="NF009044">
    <property type="entry name" value="PRK12378.1"/>
    <property type="match status" value="1"/>
</dbReference>
<dbReference type="NCBIfam" id="TIGR01033">
    <property type="entry name" value="YebC/PmpR family DNA-binding transcriptional regulator"/>
    <property type="match status" value="1"/>
</dbReference>
<dbReference type="PANTHER" id="PTHR12532:SF6">
    <property type="entry name" value="TRANSCRIPTIONAL REGULATORY PROTEIN YEBC-RELATED"/>
    <property type="match status" value="1"/>
</dbReference>
<dbReference type="PANTHER" id="PTHR12532">
    <property type="entry name" value="TRANSLATIONAL ACTIVATOR OF CYTOCHROME C OXIDASE 1"/>
    <property type="match status" value="1"/>
</dbReference>
<dbReference type="Pfam" id="PF20772">
    <property type="entry name" value="TACO1_YebC_N"/>
    <property type="match status" value="1"/>
</dbReference>
<dbReference type="Pfam" id="PF01709">
    <property type="entry name" value="Transcrip_reg"/>
    <property type="match status" value="1"/>
</dbReference>
<dbReference type="SUPFAM" id="SSF75625">
    <property type="entry name" value="YebC-like"/>
    <property type="match status" value="1"/>
</dbReference>
<feature type="chain" id="PRO_1000132206" description="Probable transcriptional regulatory protein LCABL_11860">
    <location>
        <begin position="1"/>
        <end position="243"/>
    </location>
</feature>
<feature type="region of interest" description="Disordered" evidence="2">
    <location>
        <begin position="1"/>
        <end position="23"/>
    </location>
</feature>
<organism>
    <name type="scientific">Lacticaseibacillus casei (strain BL23)</name>
    <name type="common">Lactobacillus casei</name>
    <dbReference type="NCBI Taxonomy" id="543734"/>
    <lineage>
        <taxon>Bacteria</taxon>
        <taxon>Bacillati</taxon>
        <taxon>Bacillota</taxon>
        <taxon>Bacilli</taxon>
        <taxon>Lactobacillales</taxon>
        <taxon>Lactobacillaceae</taxon>
        <taxon>Lacticaseibacillus</taxon>
    </lineage>
</organism>
<name>Y1186_LACCB</name>
<comment type="subcellular location">
    <subcellularLocation>
        <location evidence="1">Cytoplasm</location>
    </subcellularLocation>
</comment>
<comment type="similarity">
    <text evidence="1">Belongs to the TACO1 family.</text>
</comment>
<proteinExistence type="inferred from homology"/>
<accession>B3WD20</accession>